<proteinExistence type="evidence at protein level"/>
<dbReference type="EMBL" id="AF038430">
    <property type="protein sequence ID" value="AAC32555.1"/>
    <property type="molecule type" value="Genomic_DNA"/>
</dbReference>
<dbReference type="EMBL" id="CP001801">
    <property type="protein sequence ID" value="ACX95759.1"/>
    <property type="molecule type" value="Genomic_DNA"/>
</dbReference>
<dbReference type="PIR" id="S49414">
    <property type="entry name" value="S49414"/>
</dbReference>
<dbReference type="RefSeq" id="WP_012823795.1">
    <property type="nucleotide sequence ID" value="NC_013422.1"/>
</dbReference>
<dbReference type="PDB" id="3H8Y">
    <property type="method" value="X-ray"/>
    <property type="resolution" value="2.51 A"/>
    <property type="chains" value="A=1-98"/>
</dbReference>
<dbReference type="PDB" id="9F0H">
    <property type="method" value="EM"/>
    <property type="resolution" value="1.80 A"/>
    <property type="chains" value="A/B/C/D/E/F/H/J=1-98"/>
</dbReference>
<dbReference type="PDBsum" id="3H8Y"/>
<dbReference type="PDBsum" id="9F0H"/>
<dbReference type="EMDB" id="EMD-50109"/>
<dbReference type="SMR" id="P45688"/>
<dbReference type="STRING" id="555778.Hneap_0916"/>
<dbReference type="KEGG" id="hna:Hneap_0916"/>
<dbReference type="eggNOG" id="COG4577">
    <property type="taxonomic scope" value="Bacteria"/>
</dbReference>
<dbReference type="HOGENOM" id="CLU_064903_5_3_6"/>
<dbReference type="OrthoDB" id="9812608at2"/>
<dbReference type="EvolutionaryTrace" id="P45688"/>
<dbReference type="Proteomes" id="UP000009102">
    <property type="component" value="Chromosome"/>
</dbReference>
<dbReference type="GO" id="GO:0031470">
    <property type="term" value="C:carboxysome"/>
    <property type="evidence" value="ECO:0007669"/>
    <property type="project" value="UniProtKB-SubCell"/>
</dbReference>
<dbReference type="GO" id="GO:0015977">
    <property type="term" value="P:carbon fixation"/>
    <property type="evidence" value="ECO:0007669"/>
    <property type="project" value="UniProtKB-KW"/>
</dbReference>
<dbReference type="CDD" id="cd07058">
    <property type="entry name" value="BMC_CsoS1"/>
    <property type="match status" value="1"/>
</dbReference>
<dbReference type="Gene3D" id="3.30.70.1710">
    <property type="match status" value="1"/>
</dbReference>
<dbReference type="InterPro" id="IPR020808">
    <property type="entry name" value="Bact_microcomp_CS"/>
</dbReference>
<dbReference type="InterPro" id="IPR000249">
    <property type="entry name" value="BMC_dom"/>
</dbReference>
<dbReference type="InterPro" id="IPR050575">
    <property type="entry name" value="BMC_shell"/>
</dbReference>
<dbReference type="InterPro" id="IPR037233">
    <property type="entry name" value="CcmK-like_sf"/>
</dbReference>
<dbReference type="InterPro" id="IPR044872">
    <property type="entry name" value="CcmK/CsoS1_BMC"/>
</dbReference>
<dbReference type="PANTHER" id="PTHR33941:SF11">
    <property type="entry name" value="BACTERIAL MICROCOMPARTMENT SHELL PROTEIN PDUJ"/>
    <property type="match status" value="1"/>
</dbReference>
<dbReference type="PANTHER" id="PTHR33941">
    <property type="entry name" value="PROPANEDIOL UTILIZATION PROTEIN PDUA"/>
    <property type="match status" value="1"/>
</dbReference>
<dbReference type="Pfam" id="PF00936">
    <property type="entry name" value="BMC"/>
    <property type="match status" value="1"/>
</dbReference>
<dbReference type="SMART" id="SM00877">
    <property type="entry name" value="BMC"/>
    <property type="match status" value="1"/>
</dbReference>
<dbReference type="SUPFAM" id="SSF143414">
    <property type="entry name" value="CcmK-like"/>
    <property type="match status" value="1"/>
</dbReference>
<dbReference type="PROSITE" id="PS01139">
    <property type="entry name" value="BMC_1"/>
    <property type="match status" value="1"/>
</dbReference>
<dbReference type="PROSITE" id="PS51930">
    <property type="entry name" value="BMC_2"/>
    <property type="match status" value="1"/>
</dbReference>
<protein>
    <recommendedName>
        <fullName evidence="9">Carboxysome shell protein CsoS1C</fullName>
    </recommendedName>
</protein>
<reference key="1">
    <citation type="journal article" date="1994" name="Mol. Microbiol.">
        <title>Isolation and characterization of a carboxysome shell gene from Thiobacillus neapolitanus.</title>
        <authorList>
            <person name="English R.S."/>
            <person name="Lorbach S.C."/>
            <person name="Qin X."/>
            <person name="Shively J.M."/>
        </authorList>
    </citation>
    <scope>NUCLEOTIDE SEQUENCE [GENOMIC DNA]</scope>
    <source>
        <strain>ATCC 23641 / c2</strain>
    </source>
</reference>
<reference key="2">
    <citation type="journal article" date="1998" name="J. Bacteriol.">
        <title>Insertion mutation of the form I cbbL gene encoding ribulose bisphosphate carboxylase/oxygenase (RuBisCO) in Thiobacillus neapolitanus results in expression of form II RuBisCO, loss of carboxysomes, and an increased CO2 requirement for growth.</title>
        <authorList>
            <person name="Baker S.H."/>
            <person name="Jin S."/>
            <person name="Aldrich H.C."/>
            <person name="Howard G.T."/>
            <person name="Shively J.M."/>
        </authorList>
    </citation>
    <scope>SEQUENCE REVISION TO 69-98</scope>
    <source>
        <strain>ATCC 23641 / c2</strain>
    </source>
</reference>
<reference key="3">
    <citation type="submission" date="2009-10" db="EMBL/GenBank/DDBJ databases">
        <title>Complete sequence of Halothiobacillus neapolitanus c2.</title>
        <authorList>
            <consortium name="US DOE Joint Genome Institute"/>
            <person name="Lucas S."/>
            <person name="Copeland A."/>
            <person name="Lapidus A."/>
            <person name="Glavina del Rio T."/>
            <person name="Tice H."/>
            <person name="Bruce D."/>
            <person name="Goodwin L."/>
            <person name="Pitluck S."/>
            <person name="Davenport K."/>
            <person name="Brettin T."/>
            <person name="Detter J.C."/>
            <person name="Han C."/>
            <person name="Tapia R."/>
            <person name="Larimer F."/>
            <person name="Land M."/>
            <person name="Hauser L."/>
            <person name="Kyrpides N."/>
            <person name="Mikhailova N."/>
            <person name="Kerfeld C."/>
            <person name="Cannon G."/>
            <person name="Heinhort S."/>
        </authorList>
    </citation>
    <scope>NUCLEOTIDE SEQUENCE [LARGE SCALE GENOMIC DNA]</scope>
    <source>
        <strain>ATCC 23641 / c2</strain>
    </source>
</reference>
<reference key="4">
    <citation type="book" date="2006" name="Microbiology Monographs">
        <title>Carboxysomes and Carboxysome-like Inclusions.</title>
        <editorList>
            <person name="Shively J.M."/>
        </editorList>
        <authorList>
            <person name="Heinhorst S."/>
            <person name="Cannon G.C."/>
            <person name="Shively J.M."/>
        </authorList>
    </citation>
    <scope>FUNCTION</scope>
    <scope>PROTEIN ABUNDANCE</scope>
    <scope>SUBCELLULAR LOCATION</scope>
</reference>
<reference key="5">
    <citation type="journal article" date="2008" name="J. Biol. Chem.">
        <title>CO2 fixation kinetics of Halothiobacillus neapolitanus mutant carboxysomes lacking carbonic anhydrase suggest the shell acts as a diffusional barrier for CO2.</title>
        <authorList>
            <person name="Dou Z."/>
            <person name="Heinhorst S."/>
            <person name="Williams E.B."/>
            <person name="Murin C.D."/>
            <person name="Shively J.M."/>
            <person name="Cannon G.C."/>
        </authorList>
    </citation>
    <scope>FUNCTION</scope>
    <scope>SUBCELLULAR LOCATION</scope>
    <source>
        <strain>ATCC 23641 / c2</strain>
    </source>
</reference>
<reference key="6">
    <citation type="journal article" date="2012" name="Proc. Natl. Acad. Sci. U.S.A.">
        <title>Modularity of a carbon-fixing protein organelle.</title>
        <authorList>
            <person name="Bonacci W."/>
            <person name="Teng P.K."/>
            <person name="Afonso B."/>
            <person name="Niederholtmeyer H."/>
            <person name="Grob P."/>
            <person name="Silver P.A."/>
            <person name="Savage D.F."/>
        </authorList>
    </citation>
    <scope>BIOTECHNOLOGY</scope>
    <source>
        <strain>ATCC 23641 / c2</strain>
    </source>
</reference>
<reference key="7">
    <citation type="journal article" date="2018" name="Sci. Rep.">
        <title>Deciphering molecular details in the assembly of alpha-type carboxysome.</title>
        <authorList>
            <person name="Liu Y."/>
            <person name="He X."/>
            <person name="Lim W."/>
            <person name="Mueller J."/>
            <person name="Lawrie J."/>
            <person name="Kramer L."/>
            <person name="Guo J."/>
            <person name="Niu W."/>
        </authorList>
    </citation>
    <scope>INTERACTION WITH CBBL</scope>
    <scope>BIOTECHNOLOGY</scope>
    <source>
        <strain>ATCC 23641 / c2</strain>
    </source>
</reference>
<reference key="8">
    <citation type="journal article" date="2019" name="Nat. Microbiol.">
        <title>DABs are inorganic carbon pumps found throughout prokaryotic phyla.</title>
        <authorList>
            <person name="Desmarais J.J."/>
            <person name="Flamholz A.I."/>
            <person name="Blikstad C."/>
            <person name="Dugan E.J."/>
            <person name="Laughlin T.G."/>
            <person name="Oltrogge L.M."/>
            <person name="Chen A.W."/>
            <person name="Wetmore K."/>
            <person name="Diamond S."/>
            <person name="Wang J.Y."/>
            <person name="Savage D.F."/>
        </authorList>
    </citation>
    <scope>DISRUPTION PHENOTYPE</scope>
    <source>
        <strain>ATCC 23641 / c2</strain>
    </source>
</reference>
<reference key="9">
    <citation type="journal article" date="2020" name="Nat. Commun.">
        <title>Reprogramming bacterial protein organelles as a nanoreactor for hydrogen production.</title>
        <authorList>
            <person name="Li T."/>
            <person name="Jiang Q."/>
            <person name="Huang J."/>
            <person name="Aitchison C.M."/>
            <person name="Huang F."/>
            <person name="Yang M."/>
            <person name="Dykes G.F."/>
            <person name="He H.L."/>
            <person name="Wang Q."/>
            <person name="Sprick R.S."/>
            <person name="Cooper A.I."/>
            <person name="Liu L.N."/>
        </authorList>
    </citation>
    <scope>CARBOXYSOME ASSEMBLY</scope>
    <scope>BIOTECHNOLOGY</scope>
</reference>
<reference evidence="15" key="10">
    <citation type="journal article" date="2009" name="Acta Crystallogr. D">
        <title>Analysis of lattice-translocation disorder in the layered hexagonal structure of carboxysome shell protein CsoS1C.</title>
        <authorList>
            <person name="Tsai Y."/>
            <person name="Sawaya M.R."/>
            <person name="Yeates T.O."/>
        </authorList>
    </citation>
    <scope>X-RAY CRYSTALLOGRAPHY (2.51 ANGSTROMS)</scope>
    <scope>FUNCTION</scope>
    <scope>SUBUNIT</scope>
    <scope>DOMAIN</scope>
</reference>
<evidence type="ECO:0000255" key="1">
    <source>
        <dbReference type="PROSITE-ProRule" id="PRU01278"/>
    </source>
</evidence>
<evidence type="ECO:0000269" key="2">
    <source>
    </source>
</evidence>
<evidence type="ECO:0000269" key="3">
    <source>
    </source>
</evidence>
<evidence type="ECO:0000269" key="4">
    <source>
    </source>
</evidence>
<evidence type="ECO:0000269" key="5">
    <source>
    </source>
</evidence>
<evidence type="ECO:0000269" key="6">
    <source>
    </source>
</evidence>
<evidence type="ECO:0000269" key="7">
    <source>
    </source>
</evidence>
<evidence type="ECO:0000269" key="8">
    <source ref="4"/>
</evidence>
<evidence type="ECO:0000303" key="9">
    <source>
    </source>
</evidence>
<evidence type="ECO:0000303" key="10">
    <source>
    </source>
</evidence>
<evidence type="ECO:0000303" key="11">
    <source>
    </source>
</evidence>
<evidence type="ECO:0000305" key="12"/>
<evidence type="ECO:0000305" key="13">
    <source>
    </source>
</evidence>
<evidence type="ECO:0000305" key="14">
    <source>
    </source>
</evidence>
<evidence type="ECO:0007744" key="15">
    <source>
        <dbReference type="PDB" id="3H8Y"/>
    </source>
</evidence>
<evidence type="ECO:0007829" key="16">
    <source>
        <dbReference type="PDB" id="3H8Y"/>
    </source>
</evidence>
<organism>
    <name type="scientific">Halothiobacillus neapolitanus (strain ATCC 23641 / c2)</name>
    <name type="common">Thiobacillus neapolitanus</name>
    <dbReference type="NCBI Taxonomy" id="555778"/>
    <lineage>
        <taxon>Bacteria</taxon>
        <taxon>Pseudomonadati</taxon>
        <taxon>Pseudomonadota</taxon>
        <taxon>Gammaproteobacteria</taxon>
        <taxon>Chromatiales</taxon>
        <taxon>Halothiobacillaceae</taxon>
        <taxon>Halothiobacillus</taxon>
    </lineage>
</organism>
<keyword id="KW-0002">3D-structure</keyword>
<keyword id="KW-1283">Bacterial microcompartment</keyword>
<keyword id="KW-0120">Carbon dioxide fixation</keyword>
<keyword id="KW-1282">Carboxysome</keyword>
<keyword id="KW-1185">Reference proteome</keyword>
<feature type="chain" id="PRO_0000201514" description="Carboxysome shell protein CsoS1C">
    <location>
        <begin position="1"/>
        <end position="98"/>
    </location>
</feature>
<feature type="domain" description="BMC" evidence="1">
    <location>
        <begin position="8"/>
        <end position="93"/>
    </location>
</feature>
<feature type="strand" evidence="16">
    <location>
        <begin position="8"/>
        <end position="16"/>
    </location>
</feature>
<feature type="helix" evidence="16">
    <location>
        <begin position="17"/>
        <end position="30"/>
    </location>
</feature>
<feature type="strand" evidence="16">
    <location>
        <begin position="34"/>
        <end position="40"/>
    </location>
</feature>
<feature type="strand" evidence="16">
    <location>
        <begin position="45"/>
        <end position="52"/>
    </location>
</feature>
<feature type="helix" evidence="16">
    <location>
        <begin position="54"/>
        <end position="68"/>
    </location>
</feature>
<feature type="strand" evidence="16">
    <location>
        <begin position="75"/>
        <end position="83"/>
    </location>
</feature>
<feature type="helix" evidence="16">
    <location>
        <begin position="86"/>
        <end position="89"/>
    </location>
</feature>
<gene>
    <name evidence="11" type="primary">csoS1C</name>
    <name evidence="10" type="synonym">Orf1</name>
    <name type="ordered locus">Hneap_0916</name>
</gene>
<sequence length="98" mass="9919">MAAVTGIALGMIETRGLVPAIEAADAMTKAAEVRLVGRQFVGGGYVTVLVRGETGAVNAAVRAGADACERVGDGLVAAHIIARVHSEVENILPKAPEA</sequence>
<comment type="function">
    <text evidence="8 13 14">One of shell proteins of the carboxysome, a polyhedral inclusion where RuBisCO (ribulose bisphosphate carboxylase, ccbL-ccbS) is sequestered. Assembles into hexamers which make sheets that form the facets of the polyhedral carboxysome (Probable). The shell probably limits the diffusion of CO(2) into and out of the carboxysome (Probable). There are estimated to be 2970 CsoS1A/CsoS1C proteins per carboxysome (the proteins differ by only 1 residue) (Ref.4).</text>
</comment>
<comment type="function">
    <text evidence="7">Unlike beta-carboxysomes, alpha-carboxysomes (Cb) can form without cargo protein. CsoS2 is essential for Cb formation and is also capable of targeting foreign proteins to the Cb. The Cb shell assembles with the aid of CsoS2; CsoS1A, CsoS1B and CsoS1C form the majority of the shell while CsoS4A and CsoS4B form vertices. CsoS1D forms pseudohexamers that probably control metabolite flux into and out of the shell.</text>
</comment>
<comment type="subunit">
    <text evidence="3 5">Homohexamer with a small central pore (PubMed:19690376). Interacts with the N-terminus (residues 1-136) of RuBisCO (CbbL) (PubMed:30305640).</text>
</comment>
<comment type="subcellular location">
    <subcellularLocation>
        <location evidence="2 14">Carboxysome</location>
    </subcellularLocation>
    <text evidence="2 8 12">This bacterium makes alpha-type carboxysomes.</text>
</comment>
<comment type="domain">
    <text evidence="3">The tight homohexamer forms a pore with an opening of about 2 Angstroms in diameter which is positively charged.</text>
</comment>
<comment type="disruption phenotype">
    <text evidence="6">Required for growth in ambient air.</text>
</comment>
<comment type="biotechnology">
    <text evidence="4 5 7">Expression of 10 genes for alpha-carboxysome (Cb) proteins (cbbL-cbbS-csoS2-csoS3-csoS4A-csoS4B-csoS1C-csoS1A-csoS1B-csoS1D) in E.coli generates compartments that resemble Cb, contain RuBisCO and have its catalytic activity, showing it is possible to make artificial, functional Cb using these 10 genes. Cargo proteins can be targeted to these organelles (PubMed:22184212, PubMed:30305640). Artificial Cb assembly in E.coli requires csoS2-csoS4A-csoS4B-csoS1C-csoS1A-csoS1B-csoS1D (but not the gene for carbonic anhydrase, csoS3). Targeting proteins to the organelle requires at least one of the CsoS2 C-repeats; 3 repeats gives the best localization. A nanoreactor of the Cb shell proteins has been engineered which generates H(2) using a ferredoxin-hydrogenase fusion (AC P07839-Q9FYU1) and a flavodoxin/ferredoxin--NADP reductase (AC A0A0K3QZA5) targeted separately to the Cb; the hydrogenase has first to be matured and activated by HydGXEF (AC Q8EAH9, Q8EAH8, Q8EAH7 and Q8EAH6 respectively). Encapsulation increases H(2) production about 20% during anaerobic growth, and over 4-fold more during aerobic growth (PubMed:33116131).</text>
</comment>
<comment type="similarity">
    <text evidence="12">Belongs to the bacterial microcompartments protein family. CsoS1 subfamily.</text>
</comment>
<name>CSOSC_HALNC</name>
<accession>P45688</accession>
<accession>D0KZ86</accession>